<comment type="function">
    <molecule>Envelope glycoprotein gp160</molecule>
    <text evidence="1">Oligomerizes in the host endoplasmic reticulum into predominantly trimers. In a second time, gp160 transits in the host Golgi, where glycosylation is completed. The precursor is then proteolytically cleaved in the trans-Golgi and thereby activated by cellular furin or furin-like proteases to produce gp120 and gp41.</text>
</comment>
<comment type="function">
    <molecule>Surface protein gp120</molecule>
    <text evidence="1">Attaches the virus to the host lymphoid cell by binding to the primary receptor CD4. This interaction induces a structural rearrangement creating a high affinity binding site for a chemokine coreceptor like CXCR4 and/or CCR5. Acts as a ligand for CD209/DC-SIGN and CLEC4M/DC-SIGNR, which are respectively found on dendritic cells (DCs), and on endothelial cells of liver sinusoids and lymph node sinuses. These interactions allow capture of viral particles at mucosal surfaces by these cells and subsequent transmission to permissive cells. HIV subverts the migration properties of dendritic cells to gain access to CD4+ T-cells in lymph nodes. Virus transmission to permissive T-cells occurs either in trans (without DCs infection, through viral capture and transmission), or in cis (following DCs productive infection, through the usual CD4-gp120 interaction), thereby inducing a robust infection. In trans infection, bound virions remain infectious over days and it is proposed that they are not degraded, but protected in non-lysosomal acidic organelles within the DCs close to the cell membrane thus contributing to the viral infectious potential during DCs' migration from the periphery to the lymphoid tissues. On arrival at lymphoid tissues, intact virions recycle back to DCs' cell surface allowing virus transmission to CD4+ T-cells.</text>
</comment>
<comment type="function">
    <molecule>Transmembrane protein gp41</molecule>
    <text evidence="1">Acts as a class I viral fusion protein. Under the current model, the protein has at least 3 conformational states: pre-fusion native state, pre-hairpin intermediate state, and post-fusion hairpin state. During fusion of viral and target intracellular membranes, the coiled coil regions (heptad repeats) assume a trimer-of-hairpins structure, positioning the fusion peptide in close proximity to the C-terminal region of the ectodomain. The formation of this structure appears to drive apposition and subsequent fusion of viral and target cell membranes. Complete fusion occurs in host cell endosomes and is dynamin-dependent, however some lipid transfer might occur at the plasma membrane. The virus undergoes clathrin-dependent internalization long before endosomal fusion, thus minimizing the surface exposure of conserved viral epitopes during fusion and reducing the efficacy of inhibitors targeting these epitopes. Membranes fusion leads to delivery of the nucleocapsid into the cytoplasm.</text>
</comment>
<comment type="subunit">
    <molecule>Surface protein gp120</molecule>
    <text evidence="1">The mature envelope protein (Env) consists of a homotrimer of non-covalently associated gp120-gp41 heterodimers. The resulting complex protrudes from the virus surface as a spike. There seems to be as few as 10 spikes on the average virion. Interacts with host CD4, CCR5 and CXCR4. Gp120 also interacts with the C-type lectins CD209/DC-SIGN and CLEC4M/DC-SIGNR (collectively referred to as DC-SIGN(R)). Gp120 and gp41 interact with GalCer. Gp120 interacts with host ITGA4/ITGB7 complex; on CD4+ T-cells, this interaction results in rapid activation of integrin ITGAL/LFA-1, which facilitates efficient cell-to-cell spreading of HIV-1. Gp120 interacts with cell-associated heparan sulfate; this interaction increases virus infectivity on permissive cells and may be involved in infection of CD4- cells.</text>
</comment>
<comment type="subunit">
    <molecule>Transmembrane protein gp41</molecule>
    <text evidence="1">The mature envelope protein (Env) consists of a homotrimer of non-covalently associated gp120-gp41 heterodimers. The resulting complex protrudes from the virus surface as a spike. There seems to be as few as 10 spikes on the average virion.</text>
</comment>
<comment type="subcellular location">
    <molecule>Surface protein gp120</molecule>
    <subcellularLocation>
        <location evidence="1">Virion membrane</location>
        <topology evidence="1">Peripheral membrane protein</topology>
    </subcellularLocation>
    <subcellularLocation>
        <location evidence="1">Host cell membrane</location>
        <topology evidence="1">Peripheral membrane protein</topology>
    </subcellularLocation>
    <subcellularLocation>
        <location evidence="1">Host endosome membrane</location>
        <topology evidence="1">Single-pass type I membrane protein</topology>
    </subcellularLocation>
    <text evidence="1">The surface protein is not anchored to the viral envelope, but associates with the extravirion surface through its binding to TM. It is probably concentrated at the site of budding and incorporated into the virions possibly by contacts between the cytoplasmic tail of Env and the N-terminus of Gag.</text>
</comment>
<comment type="subcellular location">
    <molecule>Transmembrane protein gp41</molecule>
    <subcellularLocation>
        <location evidence="1">Virion membrane</location>
        <topology evidence="1">Single-pass type I membrane protein</topology>
    </subcellularLocation>
    <subcellularLocation>
        <location evidence="1">Host cell membrane</location>
        <topology evidence="1">Single-pass type I membrane protein</topology>
    </subcellularLocation>
    <subcellularLocation>
        <location evidence="1">Host endosome membrane</location>
        <topology evidence="1">Single-pass type I membrane protein</topology>
    </subcellularLocation>
    <text evidence="1">It is probably concentrated at the site of budding and incorporated into the virions possibly by contacts between the cytoplasmic tail of Env and the N-terminus of Gag.</text>
</comment>
<comment type="domain">
    <text evidence="1">Some of the most genetically diverse regions of the viral genome are present in Env. They are called variable regions 1 through 5 (V1 through V5). Coreceptor usage of gp120 is determined mainly by the primary structure of the third variable region (V3) in the outer domain of gp120. The sequence of V3 determines which coreceptor, CCR5 and/or CXCR4 (corresponding to R5/macrophage, X4/T cell and R5X4/T cell and macrophage tropism), is used to trigger the fusion potential of the Env complex, and hence which cells the virus can infect. Binding to CCR5 involves a region adjacent in addition to V3.</text>
</comment>
<comment type="domain">
    <text evidence="1">The membrane proximal external region (MPER) present in gp41 is a tryptophan-rich region recognized by the antibodies 2F5, Z13, and 4E10. MPER seems to play a role in fusion.</text>
</comment>
<comment type="domain">
    <text evidence="1">The 17 amino acids long immunosuppressive region is present in many retroviral envelope proteins. Synthetic peptides derived from this relatively conserved sequence inhibit immune function in vitro and in vivo.</text>
</comment>
<comment type="domain">
    <text evidence="1">The YXXL motif is involved in determining the exact site of viral release at the surface of infected mononuclear cells and promotes endocytosis. YXXL and di-leucine endocytosis motifs interact directly or indirectly with the clathrin adapter complexes, opperate independently, and their activities are not additive.</text>
</comment>
<comment type="domain">
    <text evidence="1">The CD4-binding region is targeted by the antibody b12.</text>
</comment>
<comment type="PTM">
    <text evidence="1">Highly glycosylated by host. The high number of glycan on the protein is reffered to as 'glycan shield' because it contributes to hide protein sequence from adaptive immune system.</text>
</comment>
<comment type="PTM">
    <text evidence="1">Palmitoylation of the transmembrane protein and of Env polyprotein (prior to its proteolytic cleavage) is essential for their association with host cell membrane lipid rafts. Palmitoylation is therefore required for envelope trafficking to classical lipid rafts, but not for viral replication.</text>
</comment>
<comment type="PTM">
    <text evidence="1">Specific enzymatic cleavages in vivo yield mature proteins. Envelope glycoproteins are synthesized as an inactive precursor that is heavily N-glycosylated and processed likely by host cell furin in the Golgi to yield the mature SU and TM proteins. The cleavage site between SU and TM requires the minimal sequence [KR]-X-[KR]-R. About 2 of the 9 disulfide bonds of gp41 are reduced by P4HB/PDI, following binding to CD4 receptor.</text>
</comment>
<comment type="miscellaneous">
    <text evidence="1">Inhibitors targeting HIV-1 viral envelope proteins are used as antiretroviral drugs. Attachment of virions to the cell surface via non-specific interactions and CD4 binding can be blocked by inhibitors that include cyanovirin-N, cyclotriazadisulfonamide analogs, PRO 2000, TNX 355 and PRO 542. In addition, BMS 806 can block CD4-induced conformational changes. Env interactions with the coreceptor molecules can be targeted by CCR5 antagonists including SCH-D, maraviroc (UK 427857) and aplaviroc (GW 873140), and the CXCR4 antagonist AMD 070. Fusion of viral and cellular membranes can be inhibited by peptides such as enfuvirtide and tifuvirtide (T 1249). Resistance to inhibitors associated with mutations in Env are observed. Most of the time, single mutations confer only a modest reduction in drug susceptibility. Combination of several mutations is usually required to develop a high-level drug resistance.</text>
</comment>
<comment type="miscellaneous">
    <text evidence="1">HIV-1 lineages are divided in three main groups, M (for Major), O (for Outlier), and N (for New, or Non-M, Non-O). The vast majority of strains found worldwide belong to the group M. Group O seems to be endemic to and largely confined to Cameroon and neighboring countries in West Central Africa, where these viruses represent a small minority of HIV-1 strains. The group N is represented by a limited number of isolates from Cameroonian persons. The group M is further subdivided in 9 clades or subtypes (A to D, F to H, J and K).</text>
</comment>
<comment type="similarity">
    <text evidence="1">Belongs to the HIV-1 env protein family.</text>
</comment>
<comment type="sequence caution">
    <conflict type="erroneous initiation">
        <sequence resource="EMBL-CDS" id="CAB58990"/>
    </conflict>
</comment>
<comment type="online information" name="hivdb">
    <link uri="https://hivdb.stanford.edu"/>
    <text>HIV drug resistance database</text>
</comment>
<comment type="online information" name="HIV drug resistance mutations">
    <link uri="https://www.iasusa.org/hiv-drug-resistance/hiv-drug-resistance-mutations/"/>
</comment>
<keyword id="KW-0014">AIDS</keyword>
<keyword id="KW-0053">Apoptosis</keyword>
<keyword id="KW-1165">Clathrin-mediated endocytosis of virus by host</keyword>
<keyword id="KW-0165">Cleavage on pair of basic residues</keyword>
<keyword id="KW-0175">Coiled coil</keyword>
<keyword id="KW-1015">Disulfide bond</keyword>
<keyword id="KW-1170">Fusion of virus membrane with host endosomal membrane</keyword>
<keyword id="KW-1168">Fusion of virus membrane with host membrane</keyword>
<keyword id="KW-0325">Glycoprotein</keyword>
<keyword id="KW-1032">Host cell membrane</keyword>
<keyword id="KW-1039">Host endosome</keyword>
<keyword id="KW-1043">Host membrane</keyword>
<keyword id="KW-0945">Host-virus interaction</keyword>
<keyword id="KW-0449">Lipoprotein</keyword>
<keyword id="KW-0472">Membrane</keyword>
<keyword id="KW-0564">Palmitate</keyword>
<keyword id="KW-0732">Signal</keyword>
<keyword id="KW-0812">Transmembrane</keyword>
<keyword id="KW-1133">Transmembrane helix</keyword>
<keyword id="KW-1161">Viral attachment to host cell</keyword>
<keyword id="KW-0261">Viral envelope protein</keyword>
<keyword id="KW-0899">Viral immunoevasion</keyword>
<keyword id="KW-1162">Viral penetration into host cytoplasm</keyword>
<keyword id="KW-0946">Virion</keyword>
<keyword id="KW-1164">Virus endocytosis by host</keyword>
<keyword id="KW-1160">Virus entry into host cell</keyword>
<sequence length="842" mass="95231">MRVRGMQRNWQTLGNWGILFLGILIICSNADKLWVTVYYGVPVWKEATPTLFCASDAKAYEKEVHNVWATHACVPTDPNPQEVEMENVTENFNMWKNNMVEQMHTDIISLWDESLKPCVELTPLCVTLNCTDYKGTNSTNNATSTVVSPAEIKNCSFNITTEIKDKKKKESALFYRLDVLPLNGEGNNSSTEYRLINCNTSTITQTCPKVTFEPIPIHYCAPAGFAILKCKDKRFNGTGPCKNVSTVQCTHGIKPVVSTQLLLNGSLAEEEIIIRSENITDNTKNIIVQLNETVQINCTRPNNNTRKSIHMGPGKAFYTTGDIIGDIRQAHCNISGEKWNMTLSRVKEKLKEHFKNGTITFKPPNPGGDPEILTHMFNCAGEFFYCNTTKLFNETGENGTITLPCRIKQIINMWQKVGKAIYAPPIAGSINCSSNITGMILTRDGGNNTHNETFRPGGGDMRDNWRSELYKYKVVQIEPLGIAPTRARRRVVQREKRAVGLGAVFFGFLGAAGSTMGAASITLTVQARQLLSGIVQQQSNLLRAIEAQQHLLQLTVWGIKQLRARILAVERYLKDQQLLGIWGCSGKLICTTNVPWNSSWSNKSWEEIWNNMTWMEWEKEIGNYSDTIYKLIEESQTQQEKNEQDLLALDKWASLWNWFDITKWLWYIKIFIMIIGGLIGLRIAFAVLSVVNRVRQGYSPLSFQTLIPTSRGADRPEGIEEEGGEQDKNRSVRLVSGFLALAWDDLRNLCLFSYRQLRNLILIVTRILERGLRGGWEALKYLWNLVQYWSQELKNSAISLLNTTAIAVAGGTDRIIEIGQRAFRALLHIPRRIRQGLERALL</sequence>
<organismHost>
    <name type="scientific">Homo sapiens</name>
    <name type="common">Human</name>
    <dbReference type="NCBI Taxonomy" id="9606"/>
</organismHost>
<protein>
    <recommendedName>
        <fullName evidence="1">Envelope glycoprotein gp160</fullName>
    </recommendedName>
    <alternativeName>
        <fullName evidence="1">Env polyprotein</fullName>
    </alternativeName>
    <component>
        <recommendedName>
            <fullName evidence="1">Surface protein gp120</fullName>
            <shortName evidence="1">SU</shortName>
        </recommendedName>
        <alternativeName>
            <fullName evidence="1">Glycoprotein 120</fullName>
            <shortName evidence="1">gp120</shortName>
        </alternativeName>
    </component>
    <component>
        <recommendedName>
            <fullName evidence="1">Transmembrane protein gp41</fullName>
            <shortName evidence="1">TM</shortName>
        </recommendedName>
        <alternativeName>
            <fullName evidence="1">Glycoprotein 41</fullName>
            <shortName evidence="1">gp41</shortName>
        </alternativeName>
    </component>
</protein>
<organism>
    <name type="scientific">Human immunodeficiency virus type 1 group M subtype K (isolate 96CM-MP535)</name>
    <name type="common">HIV-1</name>
    <dbReference type="NCBI Taxonomy" id="388906"/>
    <lineage>
        <taxon>Viruses</taxon>
        <taxon>Riboviria</taxon>
        <taxon>Pararnavirae</taxon>
        <taxon>Artverviricota</taxon>
        <taxon>Revtraviricetes</taxon>
        <taxon>Ortervirales</taxon>
        <taxon>Retroviridae</taxon>
        <taxon>Orthoretrovirinae</taxon>
        <taxon>Lentivirus</taxon>
        <taxon>Human immunodeficiency virus type 1</taxon>
    </lineage>
</organism>
<accession>Q9QBY2</accession>
<gene>
    <name evidence="1" type="primary">env</name>
</gene>
<evidence type="ECO:0000255" key="1">
    <source>
        <dbReference type="HAMAP-Rule" id="MF_04083"/>
    </source>
</evidence>
<feature type="signal peptide" evidence="1">
    <location>
        <begin position="1"/>
        <end position="31"/>
    </location>
</feature>
<feature type="chain" id="PRO_0000244663" description="Envelope glycoprotein gp160" evidence="1">
    <location>
        <begin position="32"/>
        <end position="842"/>
    </location>
</feature>
<feature type="chain" id="PRO_0000244664" description="Surface protein gp120" evidence="1">
    <location>
        <begin position="32"/>
        <end position="497"/>
    </location>
</feature>
<feature type="chain" id="PRO_0000244665" description="Transmembrane protein gp41" evidence="1">
    <location>
        <begin position="498"/>
        <end position="842"/>
    </location>
</feature>
<feature type="topological domain" description="Extracellular" evidence="1">
    <location>
        <begin position="32"/>
        <end position="670"/>
    </location>
</feature>
<feature type="transmembrane region" description="Helical" evidence="1">
    <location>
        <begin position="671"/>
        <end position="691"/>
    </location>
</feature>
<feature type="topological domain" description="Cytoplasmic" evidence="1">
    <location>
        <begin position="692"/>
        <end position="842"/>
    </location>
</feature>
<feature type="region of interest" description="V1" evidence="1">
    <location>
        <begin position="130"/>
        <end position="154"/>
    </location>
</feature>
<feature type="region of interest" description="V2" evidence="1">
    <location>
        <begin position="155"/>
        <end position="198"/>
    </location>
</feature>
<feature type="region of interest" description="V3" evidence="1">
    <location>
        <begin position="298"/>
        <end position="331"/>
    </location>
</feature>
<feature type="region of interest" description="CD4-binding loop" evidence="1">
    <location>
        <begin position="364"/>
        <end position="375"/>
    </location>
</feature>
<feature type="region of interest" description="V4" evidence="1">
    <location>
        <begin position="386"/>
        <end position="405"/>
    </location>
</feature>
<feature type="region of interest" description="V5" evidence="1">
    <location>
        <begin position="448"/>
        <end position="457"/>
    </location>
</feature>
<feature type="region of interest" description="Fusion peptide" evidence="1">
    <location>
        <begin position="498"/>
        <end position="518"/>
    </location>
</feature>
<feature type="region of interest" description="Immunosuppression" evidence="1">
    <location>
        <begin position="560"/>
        <end position="578"/>
    </location>
</feature>
<feature type="region of interest" description="MPER; binding to GalCer" evidence="1">
    <location>
        <begin position="648"/>
        <end position="669"/>
    </location>
</feature>
<feature type="coiled-coil region" evidence="1">
    <location>
        <begin position="619"/>
        <end position="653"/>
    </location>
</feature>
<feature type="short sequence motif" description="YXXL motif; contains endocytosis signal" evidence="1">
    <location>
        <begin position="698"/>
        <end position="701"/>
    </location>
</feature>
<feature type="short sequence motif" description="Di-leucine internalization motif" evidence="1">
    <location>
        <begin position="841"/>
        <end position="842"/>
    </location>
</feature>
<feature type="site" description="Cleavage; by host furin" evidence="1">
    <location>
        <begin position="497"/>
        <end position="498"/>
    </location>
</feature>
<feature type="lipid moiety-binding region" description="S-palmitoyl cysteine; by host" evidence="1">
    <location>
        <position position="750"/>
    </location>
</feature>
<feature type="glycosylation site" description="N-linked (GlcNAc...) asparagine; by host" evidence="1">
    <location>
        <position position="87"/>
    </location>
</feature>
<feature type="glycosylation site" description="N-linked (GlcNAc...) asparagine; by host" evidence="1">
    <location>
        <position position="129"/>
    </location>
</feature>
<feature type="glycosylation site" description="N-linked (GlcNAc...) asparagine; by host" evidence="1">
    <location>
        <position position="137"/>
    </location>
</feature>
<feature type="glycosylation site" description="N-linked (GlcNAc...) asparagine; by host" evidence="1">
    <location>
        <position position="141"/>
    </location>
</feature>
<feature type="glycosylation site" description="N-linked (GlcNAc...) asparagine; by host" evidence="1">
    <location>
        <position position="154"/>
    </location>
</feature>
<feature type="glycosylation site" description="N-linked (GlcNAc...) asparagine; by host" evidence="1">
    <location>
        <position position="158"/>
    </location>
</feature>
<feature type="glycosylation site" description="N-linked (GlcNAc...) asparagine; by host" evidence="1">
    <location>
        <position position="187"/>
    </location>
</feature>
<feature type="glycosylation site" description="N-linked (GlcNAc...) asparagine; by host" evidence="1">
    <location>
        <position position="188"/>
    </location>
</feature>
<feature type="glycosylation site" description="N-linked (GlcNAc...) asparagine; by host" evidence="1">
    <location>
        <position position="199"/>
    </location>
</feature>
<feature type="glycosylation site" description="N-linked (GlcNAc...) asparagine; by host" evidence="1">
    <location>
        <position position="236"/>
    </location>
</feature>
<feature type="glycosylation site" description="N-linked (GlcNAc...) asparagine; by host" evidence="1">
    <location>
        <position position="243"/>
    </location>
</feature>
<feature type="glycosylation site" description="N-linked (GlcNAc...) asparagine; by host" evidence="1">
    <location>
        <position position="264"/>
    </location>
</feature>
<feature type="glycosylation site" description="N-linked (GlcNAc...) asparagine; by host" evidence="1">
    <location>
        <position position="278"/>
    </location>
</feature>
<feature type="glycosylation site" description="N-linked (GlcNAc...) asparagine; by host" evidence="1">
    <location>
        <position position="291"/>
    </location>
</feature>
<feature type="glycosylation site" description="N-linked (GlcNAc...) asparagine; by host" evidence="1">
    <location>
        <position position="297"/>
    </location>
</feature>
<feature type="glycosylation site" description="N-linked (GlcNAc...) asparagine; by host" evidence="1">
    <location>
        <position position="303"/>
    </location>
</feature>
<feature type="glycosylation site" description="N-linked (GlcNAc...) asparagine; by host" evidence="1">
    <location>
        <position position="333"/>
    </location>
</feature>
<feature type="glycosylation site" description="N-linked (GlcNAc...) asparagine; by host" evidence="1">
    <location>
        <position position="340"/>
    </location>
</feature>
<feature type="glycosylation site" description="N-linked (GlcNAc...) asparagine; by host" evidence="1">
    <location>
        <position position="356"/>
    </location>
</feature>
<feature type="glycosylation site" description="N-linked (GlcNAc...) asparagine; by host" evidence="1">
    <location>
        <position position="387"/>
    </location>
</feature>
<feature type="glycosylation site" description="N-linked (GlcNAc...) asparagine; by host" evidence="1">
    <location>
        <position position="393"/>
    </location>
</feature>
<feature type="glycosylation site" description="N-linked (GlcNAc...) asparagine; by host" evidence="1">
    <location>
        <position position="398"/>
    </location>
</feature>
<feature type="glycosylation site" description="N-linked (GlcNAc...) asparagine; by host" evidence="1">
    <location>
        <position position="431"/>
    </location>
</feature>
<feature type="glycosylation site" description="N-linked (GlcNAc...) asparagine; by host" evidence="1">
    <location>
        <position position="435"/>
    </location>
</feature>
<feature type="glycosylation site" description="N-linked (GlcNAc...) asparagine; by host" evidence="1">
    <location>
        <position position="447"/>
    </location>
</feature>
<feature type="glycosylation site" description="N-linked (GlcNAc...) asparagine; by host" evidence="1">
    <location>
        <position position="451"/>
    </location>
</feature>
<feature type="glycosylation site" description="N-linked (GlcNAc...) asparagine; by host" evidence="1">
    <location>
        <position position="597"/>
    </location>
</feature>
<feature type="glycosylation site" description="N-linked (GlcNAc...) asparagine; by host" evidence="1">
    <location>
        <position position="602"/>
    </location>
</feature>
<feature type="glycosylation site" description="N-linked (GlcNAc...) asparagine; by host" evidence="1">
    <location>
        <position position="611"/>
    </location>
</feature>
<feature type="glycosylation site" description="N-linked (GlcNAc...) asparagine; by host" evidence="1">
    <location>
        <position position="623"/>
    </location>
</feature>
<feature type="disulfide bond" evidence="1">
    <location>
        <begin position="53"/>
        <end position="73"/>
    </location>
</feature>
<feature type="disulfide bond" evidence="1">
    <location>
        <begin position="118"/>
        <end position="207"/>
    </location>
</feature>
<feature type="disulfide bond" evidence="1">
    <location>
        <begin position="125"/>
        <end position="198"/>
    </location>
</feature>
<feature type="disulfide bond" evidence="1">
    <location>
        <begin position="130"/>
        <end position="155"/>
    </location>
</feature>
<feature type="disulfide bond" evidence="1">
    <location>
        <begin position="220"/>
        <end position="249"/>
    </location>
</feature>
<feature type="disulfide bond" evidence="1">
    <location>
        <begin position="230"/>
        <end position="241"/>
    </location>
</feature>
<feature type="disulfide bond" evidence="1">
    <location>
        <begin position="298"/>
        <end position="332"/>
    </location>
</feature>
<feature type="disulfide bond" evidence="1">
    <location>
        <begin position="379"/>
        <end position="432"/>
    </location>
</feature>
<feature type="disulfide bond" evidence="1">
    <location>
        <begin position="386"/>
        <end position="405"/>
    </location>
</feature>
<feature type="disulfide bond" evidence="1">
    <location>
        <begin position="584"/>
        <end position="590"/>
    </location>
</feature>
<name>ENV_HV196</name>
<dbReference type="EMBL" id="AJ249239">
    <property type="protein sequence ID" value="CAB58990.1"/>
    <property type="status" value="ALT_INIT"/>
    <property type="molecule type" value="Genomic_RNA"/>
</dbReference>
<dbReference type="SMR" id="Q9QBY2"/>
<dbReference type="GlyCosmos" id="Q9QBY2">
    <property type="glycosylation" value="30 sites, No reported glycans"/>
</dbReference>
<dbReference type="Proteomes" id="UP000101651">
    <property type="component" value="Segment"/>
</dbReference>
<dbReference type="GO" id="GO:0044175">
    <property type="term" value="C:host cell endosome membrane"/>
    <property type="evidence" value="ECO:0007669"/>
    <property type="project" value="UniProtKB-SubCell"/>
</dbReference>
<dbReference type="GO" id="GO:0020002">
    <property type="term" value="C:host cell plasma membrane"/>
    <property type="evidence" value="ECO:0007669"/>
    <property type="project" value="UniProtKB-SubCell"/>
</dbReference>
<dbReference type="GO" id="GO:0016020">
    <property type="term" value="C:membrane"/>
    <property type="evidence" value="ECO:0007669"/>
    <property type="project" value="UniProtKB-UniRule"/>
</dbReference>
<dbReference type="GO" id="GO:0019031">
    <property type="term" value="C:viral envelope"/>
    <property type="evidence" value="ECO:0007669"/>
    <property type="project" value="UniProtKB-KW"/>
</dbReference>
<dbReference type="GO" id="GO:0055036">
    <property type="term" value="C:virion membrane"/>
    <property type="evidence" value="ECO:0007669"/>
    <property type="project" value="UniProtKB-SubCell"/>
</dbReference>
<dbReference type="GO" id="GO:0005198">
    <property type="term" value="F:structural molecule activity"/>
    <property type="evidence" value="ECO:0007669"/>
    <property type="project" value="UniProtKB-UniRule"/>
</dbReference>
<dbReference type="GO" id="GO:0075512">
    <property type="term" value="P:clathrin-dependent endocytosis of virus by host cell"/>
    <property type="evidence" value="ECO:0007669"/>
    <property type="project" value="UniProtKB-UniRule"/>
</dbReference>
<dbReference type="GO" id="GO:0039654">
    <property type="term" value="P:fusion of virus membrane with host endosome membrane"/>
    <property type="evidence" value="ECO:0007669"/>
    <property type="project" value="UniProtKB-UniRule"/>
</dbReference>
<dbReference type="GO" id="GO:0019064">
    <property type="term" value="P:fusion of virus membrane with host plasma membrane"/>
    <property type="evidence" value="ECO:0007669"/>
    <property type="project" value="UniProtKB-UniRule"/>
</dbReference>
<dbReference type="GO" id="GO:1903908">
    <property type="term" value="P:positive regulation of plasma membrane raft polarization"/>
    <property type="evidence" value="ECO:0007669"/>
    <property type="project" value="UniProtKB-UniRule"/>
</dbReference>
<dbReference type="GO" id="GO:1903911">
    <property type="term" value="P:positive regulation of receptor clustering"/>
    <property type="evidence" value="ECO:0007669"/>
    <property type="project" value="UniProtKB-UniRule"/>
</dbReference>
<dbReference type="GO" id="GO:0019082">
    <property type="term" value="P:viral protein processing"/>
    <property type="evidence" value="ECO:0007669"/>
    <property type="project" value="UniProtKB-UniRule"/>
</dbReference>
<dbReference type="GO" id="GO:0019062">
    <property type="term" value="P:virion attachment to host cell"/>
    <property type="evidence" value="ECO:0007669"/>
    <property type="project" value="UniProtKB-UniRule"/>
</dbReference>
<dbReference type="CDD" id="cd09909">
    <property type="entry name" value="HIV-1-like_HR1-HR2"/>
    <property type="match status" value="1"/>
</dbReference>
<dbReference type="FunFam" id="1.10.287.210:FF:000001">
    <property type="entry name" value="Envelope glycoprotein gp160"/>
    <property type="match status" value="1"/>
</dbReference>
<dbReference type="FunFam" id="1.20.5.490:FF:000001">
    <property type="entry name" value="Envelope glycoprotein gp160"/>
    <property type="match status" value="1"/>
</dbReference>
<dbReference type="FunFam" id="2.170.40.20:FF:000003">
    <property type="entry name" value="Envelope glycoprotein gp160"/>
    <property type="match status" value="1"/>
</dbReference>
<dbReference type="FunFam" id="2.170.40.20:FF:000004">
    <property type="entry name" value="Envelope glycoprotein gp160"/>
    <property type="match status" value="1"/>
</dbReference>
<dbReference type="Gene3D" id="1.10.287.210">
    <property type="match status" value="1"/>
</dbReference>
<dbReference type="Gene3D" id="2.170.40.20">
    <property type="entry name" value="Human immunodeficiency virus 1, Gp160, envelope glycoprotein"/>
    <property type="match status" value="2"/>
</dbReference>
<dbReference type="Gene3D" id="1.20.5.490">
    <property type="entry name" value="Single helix bin"/>
    <property type="match status" value="1"/>
</dbReference>
<dbReference type="HAMAP" id="MF_04083">
    <property type="entry name" value="HIV_ENV"/>
    <property type="match status" value="1"/>
</dbReference>
<dbReference type="InterPro" id="IPR036377">
    <property type="entry name" value="Gp120_core_sf"/>
</dbReference>
<dbReference type="InterPro" id="IPR037527">
    <property type="entry name" value="Gp160"/>
</dbReference>
<dbReference type="InterPro" id="IPR000328">
    <property type="entry name" value="GP41-like"/>
</dbReference>
<dbReference type="InterPro" id="IPR000777">
    <property type="entry name" value="HIV1_Gp120"/>
</dbReference>
<dbReference type="Pfam" id="PF00516">
    <property type="entry name" value="GP120"/>
    <property type="match status" value="2"/>
</dbReference>
<dbReference type="Pfam" id="PF00517">
    <property type="entry name" value="GP41"/>
    <property type="match status" value="1"/>
</dbReference>
<dbReference type="SUPFAM" id="SSF56502">
    <property type="entry name" value="gp120 core"/>
    <property type="match status" value="2"/>
</dbReference>
<dbReference type="SUPFAM" id="SSF58069">
    <property type="entry name" value="Virus ectodomain"/>
    <property type="match status" value="1"/>
</dbReference>
<reference key="1">
    <citation type="journal article" date="2000" name="AIDS Res. Hum. Retroviruses">
        <title>Near-full-length genome sequencing of divergent African HIV type 1 subtype F viruses leads to the identification of a new HIV type 1 subtype designated K.</title>
        <authorList>
            <person name="Triques K."/>
            <person name="Bourgeois A."/>
            <person name="Vidale N."/>
            <person name="Mpoudi-Ngole E."/>
            <person name="Mulanga-Kabeya C."/>
            <person name="Nzilambi N."/>
            <person name="Torimiro N."/>
            <person name="Saman E."/>
            <person name="Delaporte E."/>
            <person name="Peeters M."/>
        </authorList>
    </citation>
    <scope>NUCLEOTIDE SEQUENCE [GENOMIC RNA]</scope>
</reference>
<reference key="2">
    <citation type="journal article" date="2003" name="APMIS">
        <title>Pathogens target DC-SIGN to influence their fate DC-SIGN functions as a pathogen receptor with broad specificity.</title>
        <authorList>
            <person name="Geijtenbeek T.B."/>
            <person name="van Kooyk Y."/>
        </authorList>
    </citation>
    <scope>REVIEW</scope>
</reference>
<reference key="3">
    <citation type="journal article" date="2003" name="Biochim. Biophys. Acta">
        <title>The HIV Env-mediated fusion reaction.</title>
        <authorList>
            <person name="Gallo S.A."/>
            <person name="Finnegan C.M."/>
            <person name="Viard M."/>
            <person name="Raviv Y."/>
            <person name="Dimitrov A."/>
            <person name="Rawat S.S."/>
            <person name="Puri A."/>
            <person name="Durell S."/>
            <person name="Blumenthal R."/>
        </authorList>
    </citation>
    <scope>REVIEW</scope>
</reference>
<reference key="4">
    <citation type="journal article" date="2005" name="Cell Death Differ.">
        <title>Mechanisms of apoptosis induction by the HIV-1 envelope.</title>
        <authorList>
            <person name="Perfettini J.-L."/>
            <person name="Castedo M."/>
            <person name="Roumier T."/>
            <person name="Andreau K."/>
            <person name="Nardacci R."/>
            <person name="Piacentini M."/>
            <person name="Kroemer G."/>
        </authorList>
    </citation>
    <scope>REVIEW</scope>
</reference>
<reference key="5">
    <citation type="journal article" date="2005" name="AIDS Res. Hum. Retroviruses">
        <title>V3: HIV's switch-hitter.</title>
        <authorList>
            <person name="Hartley O."/>
            <person name="Klasse P.J."/>
            <person name="Sattentau Q.J."/>
            <person name="Moore J.P."/>
        </authorList>
    </citation>
    <scope>REVIEW</scope>
</reference>
<reference key="6">
    <citation type="journal article" date="2005" name="Drugs">
        <title>Emerging drug targets for antiretroviral therapy.</title>
        <authorList>
            <person name="Reeves J.D."/>
            <person name="Piefer A.J."/>
        </authorList>
    </citation>
    <scope>REVIEW</scope>
</reference>
<reference key="7">
    <citation type="journal article" date="2006" name="EMBO J.">
        <title>HIV and the chemokine system: 10 years later.</title>
        <authorList>
            <person name="Lusso P."/>
        </authorList>
    </citation>
    <scope>REVIEW</scope>
</reference>
<proteinExistence type="inferred from homology"/>